<evidence type="ECO:0000255" key="1">
    <source>
        <dbReference type="HAMAP-Rule" id="MF_00044"/>
    </source>
</evidence>
<evidence type="ECO:0000269" key="2">
    <source>
    </source>
</evidence>
<organism>
    <name type="scientific">Deinococcus radiodurans (strain ATCC 13939 / DSM 20539 / JCM 16871 / CCUG 27074 / LMG 4051 / NBRC 15346 / NCIMB 9279 / VKM B-1422 / R1)</name>
    <dbReference type="NCBI Taxonomy" id="243230"/>
    <lineage>
        <taxon>Bacteria</taxon>
        <taxon>Thermotogati</taxon>
        <taxon>Deinococcota</taxon>
        <taxon>Deinococci</taxon>
        <taxon>Deinococcales</taxon>
        <taxon>Deinococcaceae</taxon>
        <taxon>Deinococcus</taxon>
    </lineage>
</organism>
<dbReference type="EC" id="6.1.1.12"/>
<dbReference type="EMBL" id="AE000513">
    <property type="protein sequence ID" value="AAF10918.1"/>
    <property type="molecule type" value="Genomic_DNA"/>
</dbReference>
<dbReference type="PIR" id="D75406">
    <property type="entry name" value="D75406"/>
</dbReference>
<dbReference type="RefSeq" id="NP_295070.1">
    <property type="nucleotide sequence ID" value="NC_001263.1"/>
</dbReference>
<dbReference type="SMR" id="Q9RUN7"/>
<dbReference type="FunCoup" id="Q9RUN7">
    <property type="interactions" value="465"/>
</dbReference>
<dbReference type="STRING" id="243230.DR_1347"/>
<dbReference type="PaxDb" id="243230-DR_1347"/>
<dbReference type="EnsemblBacteria" id="AAF10918">
    <property type="protein sequence ID" value="AAF10918"/>
    <property type="gene ID" value="DR_1347"/>
</dbReference>
<dbReference type="KEGG" id="dra:DR_1347"/>
<dbReference type="PATRIC" id="fig|243230.17.peg.1544"/>
<dbReference type="eggNOG" id="COG0173">
    <property type="taxonomic scope" value="Bacteria"/>
</dbReference>
<dbReference type="HOGENOM" id="CLU_014330_3_2_0"/>
<dbReference type="InParanoid" id="Q9RUN7"/>
<dbReference type="OrthoDB" id="9802326at2"/>
<dbReference type="BioCyc" id="MetaCyc:MONOMER-14053"/>
<dbReference type="Proteomes" id="UP000002524">
    <property type="component" value="Chromosome 1"/>
</dbReference>
<dbReference type="GO" id="GO:0005737">
    <property type="term" value="C:cytoplasm"/>
    <property type="evidence" value="ECO:0007669"/>
    <property type="project" value="UniProtKB-SubCell"/>
</dbReference>
<dbReference type="GO" id="GO:0004815">
    <property type="term" value="F:aspartate-tRNA ligase activity"/>
    <property type="evidence" value="ECO:0000318"/>
    <property type="project" value="GO_Central"/>
</dbReference>
<dbReference type="GO" id="GO:0005524">
    <property type="term" value="F:ATP binding"/>
    <property type="evidence" value="ECO:0007669"/>
    <property type="project" value="UniProtKB-UniRule"/>
</dbReference>
<dbReference type="GO" id="GO:0003676">
    <property type="term" value="F:nucleic acid binding"/>
    <property type="evidence" value="ECO:0007669"/>
    <property type="project" value="InterPro"/>
</dbReference>
<dbReference type="GO" id="GO:0006422">
    <property type="term" value="P:aspartyl-tRNA aminoacylation"/>
    <property type="evidence" value="ECO:0000318"/>
    <property type="project" value="GO_Central"/>
</dbReference>
<dbReference type="CDD" id="cd00777">
    <property type="entry name" value="AspRS_core"/>
    <property type="match status" value="1"/>
</dbReference>
<dbReference type="CDD" id="cd04317">
    <property type="entry name" value="EcAspRS_like_N"/>
    <property type="match status" value="1"/>
</dbReference>
<dbReference type="Gene3D" id="3.30.930.10">
    <property type="entry name" value="Bira Bifunctional Protein, Domain 2"/>
    <property type="match status" value="1"/>
</dbReference>
<dbReference type="Gene3D" id="3.30.1360.30">
    <property type="entry name" value="GAD-like domain"/>
    <property type="match status" value="1"/>
</dbReference>
<dbReference type="Gene3D" id="2.40.50.140">
    <property type="entry name" value="Nucleic acid-binding proteins"/>
    <property type="match status" value="1"/>
</dbReference>
<dbReference type="HAMAP" id="MF_00044">
    <property type="entry name" value="Asp_tRNA_synth_type1"/>
    <property type="match status" value="1"/>
</dbReference>
<dbReference type="InterPro" id="IPR004364">
    <property type="entry name" value="Aa-tRNA-synt_II"/>
</dbReference>
<dbReference type="InterPro" id="IPR006195">
    <property type="entry name" value="aa-tRNA-synth_II"/>
</dbReference>
<dbReference type="InterPro" id="IPR045864">
    <property type="entry name" value="aa-tRNA-synth_II/BPL/LPL"/>
</dbReference>
<dbReference type="InterPro" id="IPR004524">
    <property type="entry name" value="Asp-tRNA-ligase_1"/>
</dbReference>
<dbReference type="InterPro" id="IPR047089">
    <property type="entry name" value="Asp-tRNA-ligase_1_N"/>
</dbReference>
<dbReference type="InterPro" id="IPR002312">
    <property type="entry name" value="Asp/Asn-tRNA-synth_IIb"/>
</dbReference>
<dbReference type="InterPro" id="IPR047090">
    <property type="entry name" value="AspRS_core"/>
</dbReference>
<dbReference type="InterPro" id="IPR004115">
    <property type="entry name" value="GAD-like_sf"/>
</dbReference>
<dbReference type="InterPro" id="IPR029351">
    <property type="entry name" value="GAD_dom"/>
</dbReference>
<dbReference type="InterPro" id="IPR012340">
    <property type="entry name" value="NA-bd_OB-fold"/>
</dbReference>
<dbReference type="InterPro" id="IPR004365">
    <property type="entry name" value="NA-bd_OB_tRNA"/>
</dbReference>
<dbReference type="NCBIfam" id="TIGR00459">
    <property type="entry name" value="aspS_bact"/>
    <property type="match status" value="1"/>
</dbReference>
<dbReference type="NCBIfam" id="NF001750">
    <property type="entry name" value="PRK00476.1"/>
    <property type="match status" value="1"/>
</dbReference>
<dbReference type="PANTHER" id="PTHR22594:SF5">
    <property type="entry name" value="ASPARTATE--TRNA LIGASE, MITOCHONDRIAL"/>
    <property type="match status" value="1"/>
</dbReference>
<dbReference type="PANTHER" id="PTHR22594">
    <property type="entry name" value="ASPARTYL/LYSYL-TRNA SYNTHETASE"/>
    <property type="match status" value="1"/>
</dbReference>
<dbReference type="Pfam" id="PF02938">
    <property type="entry name" value="GAD"/>
    <property type="match status" value="1"/>
</dbReference>
<dbReference type="Pfam" id="PF00152">
    <property type="entry name" value="tRNA-synt_2"/>
    <property type="match status" value="1"/>
</dbReference>
<dbReference type="Pfam" id="PF01336">
    <property type="entry name" value="tRNA_anti-codon"/>
    <property type="match status" value="1"/>
</dbReference>
<dbReference type="PRINTS" id="PR01042">
    <property type="entry name" value="TRNASYNTHASP"/>
</dbReference>
<dbReference type="SUPFAM" id="SSF55681">
    <property type="entry name" value="Class II aaRS and biotin synthetases"/>
    <property type="match status" value="1"/>
</dbReference>
<dbReference type="SUPFAM" id="SSF55261">
    <property type="entry name" value="GAD domain-like"/>
    <property type="match status" value="1"/>
</dbReference>
<dbReference type="SUPFAM" id="SSF50249">
    <property type="entry name" value="Nucleic acid-binding proteins"/>
    <property type="match status" value="1"/>
</dbReference>
<dbReference type="PROSITE" id="PS50862">
    <property type="entry name" value="AA_TRNA_LIGASE_II"/>
    <property type="match status" value="1"/>
</dbReference>
<protein>
    <recommendedName>
        <fullName>Aspartate--tRNA(Asp) ligase</fullName>
        <ecNumber>6.1.1.12</ecNumber>
    </recommendedName>
    <alternativeName>
        <fullName>Aspartyl-tRNA synthetase 1</fullName>
        <shortName>AspRS1</shortName>
    </alternativeName>
    <alternativeName>
        <fullName>Discriminating aspartyl-tRNA synthetase</fullName>
        <shortName>D-AspRS</shortName>
    </alternativeName>
</protein>
<feature type="chain" id="PRO_0000110865" description="Aspartate--tRNA(Asp) ligase">
    <location>
        <begin position="1"/>
        <end position="577"/>
    </location>
</feature>
<feature type="region of interest" description="Aspartate" evidence="1">
    <location>
        <begin position="196"/>
        <end position="199"/>
    </location>
</feature>
<feature type="binding site" evidence="1">
    <location>
        <position position="172"/>
    </location>
    <ligand>
        <name>L-aspartate</name>
        <dbReference type="ChEBI" id="CHEBI:29991"/>
    </ligand>
</feature>
<feature type="binding site" evidence="1">
    <location>
        <begin position="218"/>
        <end position="220"/>
    </location>
    <ligand>
        <name>ATP</name>
        <dbReference type="ChEBI" id="CHEBI:30616"/>
    </ligand>
</feature>
<feature type="binding site" evidence="1">
    <location>
        <position position="218"/>
    </location>
    <ligand>
        <name>L-aspartate</name>
        <dbReference type="ChEBI" id="CHEBI:29991"/>
    </ligand>
</feature>
<feature type="binding site" evidence="1">
    <location>
        <position position="227"/>
    </location>
    <ligand>
        <name>ATP</name>
        <dbReference type="ChEBI" id="CHEBI:30616"/>
    </ligand>
</feature>
<feature type="binding site" evidence="1">
    <location>
        <position position="438"/>
    </location>
    <ligand>
        <name>L-aspartate</name>
        <dbReference type="ChEBI" id="CHEBI:29991"/>
    </ligand>
</feature>
<feature type="binding site" evidence="1">
    <location>
        <position position="473"/>
    </location>
    <ligand>
        <name>ATP</name>
        <dbReference type="ChEBI" id="CHEBI:30616"/>
    </ligand>
</feature>
<feature type="binding site" evidence="1">
    <location>
        <position position="480"/>
    </location>
    <ligand>
        <name>L-aspartate</name>
        <dbReference type="ChEBI" id="CHEBI:29991"/>
    </ligand>
</feature>
<feature type="binding site" evidence="1">
    <location>
        <begin position="525"/>
        <end position="528"/>
    </location>
    <ligand>
        <name>ATP</name>
        <dbReference type="ChEBI" id="CHEBI:30616"/>
    </ligand>
</feature>
<sequence>MMKRTSLIGQLGQAQQQQTVTLQGWVSRRRDLGGLIFLELRDRSGTVQVQVEPDSPAFAEADRLRAEYVAEIEGTFQPRPESQRKGGLADFEVIASRVKVLNAAKTPPFELDKGESVAEDIRLKYRYLDLRRPEMQRALMLRSKAVTAVTEFLDAEGFIQVETPMLTKSTPEGARDFLVPSRLNPGEFYALPQSPQLFKQLLMIAGFDRYYQLARCFRDEDLRADRQPDFTQLDMEMSFVEQDDVLEVQERLLAHVFRRVLDVELPLPFPRMSYFDAMDRYGSDKPDLRFDSAFTDVTGLFRGGEFAAFASAPSVKVLVAPELTRKQIDELERVAKQNGAGGLAWLRRDGEGFTGGISKFVGGIAPQLIEQTGVAQGGTLLFAAGEWKKAVTALGAVRLALRDLFDLAAGGPQFHVSWVVDFPQLEFDEDSQSWTYMHHPFTAPHPGDVALFGTERQGEMRAQAYDLVMNGFEIGGGSVRIHDPEVQAKMFQAIGFSEEAAREKFGFFLDALEYGTPPHGGIAWGFDRLLMLMSGAGSIREVIAFPKNNRGADLMAQAPSPVEDAQLAEVGVQVRGE</sequence>
<gene>
    <name type="primary">aspS1</name>
    <name type="ordered locus">DR_1347</name>
</gene>
<proteinExistence type="evidence at protein level"/>
<reference key="1">
    <citation type="journal article" date="1999" name="Science">
        <title>Genome sequence of the radioresistant bacterium Deinococcus radiodurans R1.</title>
        <authorList>
            <person name="White O."/>
            <person name="Eisen J.A."/>
            <person name="Heidelberg J.F."/>
            <person name="Hickey E.K."/>
            <person name="Peterson J.D."/>
            <person name="Dodson R.J."/>
            <person name="Haft D.H."/>
            <person name="Gwinn M.L."/>
            <person name="Nelson W.C."/>
            <person name="Richardson D.L."/>
            <person name="Moffat K.S."/>
            <person name="Qin H."/>
            <person name="Jiang L."/>
            <person name="Pamphile W."/>
            <person name="Crosby M."/>
            <person name="Shen M."/>
            <person name="Vamathevan J.J."/>
            <person name="Lam P."/>
            <person name="McDonald L.A."/>
            <person name="Utterback T.R."/>
            <person name="Zalewski C."/>
            <person name="Makarova K.S."/>
            <person name="Aravind L."/>
            <person name="Daly M.J."/>
            <person name="Minton K.W."/>
            <person name="Fleischmann R.D."/>
            <person name="Ketchum K.A."/>
            <person name="Nelson K.E."/>
            <person name="Salzberg S.L."/>
            <person name="Smith H.O."/>
            <person name="Venter J.C."/>
            <person name="Fraser C.M."/>
        </authorList>
    </citation>
    <scope>NUCLEOTIDE SEQUENCE [LARGE SCALE GENOMIC DNA]</scope>
    <source>
        <strain>ATCC 13939 / DSM 20539 / JCM 16871 / CCUG 27074 / LMG 4051 / NBRC 15346 / NCIMB 9279 / VKM B-1422 / R1</strain>
    </source>
</reference>
<reference key="2">
    <citation type="journal article" date="1998" name="Proc. Natl. Acad. Sci. U.S.A.">
        <title>Glutamyl-tRNA(Gln) amidotransferase in Deinococcus radiodurans may be confined to asparagine biosynthesis.</title>
        <authorList>
            <person name="Curnow A.W."/>
            <person name="Tumbula D.L."/>
            <person name="Pelaschier J.T."/>
            <person name="Min B."/>
            <person name="Soll D."/>
        </authorList>
    </citation>
    <scope>FUNCTION AS A DISCRIMINATING ASPRS</scope>
    <scope>GENE NAME</scope>
</reference>
<keyword id="KW-0030">Aminoacyl-tRNA synthetase</keyword>
<keyword id="KW-0067">ATP-binding</keyword>
<keyword id="KW-0963">Cytoplasm</keyword>
<keyword id="KW-0436">Ligase</keyword>
<keyword id="KW-0547">Nucleotide-binding</keyword>
<keyword id="KW-0648">Protein biosynthesis</keyword>
<keyword id="KW-1185">Reference proteome</keyword>
<accession>Q9RUN7</accession>
<name>SYD_DEIRA</name>
<comment type="function">
    <text evidence="2">Catalyzes the attachment of L-aspartate to tRNA(Asp) in a two-step reaction: L-aspartate is first activated by ATP to form Asp-AMP and then transferred to the acceptor end of tRNA(Asp). Is specific for tRNA(Asp) since it cannot aspartylate tRNA(Asn).</text>
</comment>
<comment type="catalytic activity">
    <reaction evidence="1">
        <text>tRNA(Asp) + L-aspartate + ATP = L-aspartyl-tRNA(Asp) + AMP + diphosphate</text>
        <dbReference type="Rhea" id="RHEA:19649"/>
        <dbReference type="Rhea" id="RHEA-COMP:9660"/>
        <dbReference type="Rhea" id="RHEA-COMP:9678"/>
        <dbReference type="ChEBI" id="CHEBI:29991"/>
        <dbReference type="ChEBI" id="CHEBI:30616"/>
        <dbReference type="ChEBI" id="CHEBI:33019"/>
        <dbReference type="ChEBI" id="CHEBI:78442"/>
        <dbReference type="ChEBI" id="CHEBI:78516"/>
        <dbReference type="ChEBI" id="CHEBI:456215"/>
        <dbReference type="EC" id="6.1.1.12"/>
    </reaction>
</comment>
<comment type="subunit">
    <text evidence="1">Homodimer.</text>
</comment>
<comment type="subcellular location">
    <subcellularLocation>
        <location evidence="1">Cytoplasm</location>
    </subcellularLocation>
</comment>
<comment type="similarity">
    <text evidence="1">Belongs to the class-II aminoacyl-tRNA synthetase family. Type 1 subfamily.</text>
</comment>